<protein>
    <recommendedName>
        <fullName>Cytochrome b558/566 subunit A</fullName>
    </recommendedName>
</protein>
<proteinExistence type="evidence at protein level"/>
<organism>
    <name type="scientific">Sulfolobus acidocaldarius (strain ATCC 33909 / DSM 639 / JCM 8929 / NBRC 15157 / NCIMB 11770)</name>
    <dbReference type="NCBI Taxonomy" id="330779"/>
    <lineage>
        <taxon>Archaea</taxon>
        <taxon>Thermoproteota</taxon>
        <taxon>Thermoprotei</taxon>
        <taxon>Sulfolobales</taxon>
        <taxon>Sulfolobaceae</taxon>
        <taxon>Sulfolobus</taxon>
    </lineage>
</organism>
<comment type="function">
    <text>Monoheme cytochrome whose physiological function is not yet clear.</text>
</comment>
<comment type="cofactor">
    <cofactor>
        <name>heme</name>
        <dbReference type="ChEBI" id="CHEBI:30413"/>
    </cofactor>
    <text>Binds 1 heme group per subunit.</text>
</comment>
<comment type="biophysicochemical properties">
    <redoxPotential>
        <text>E(0) is &gt;350 mV.</text>
    </redoxPotential>
</comment>
<comment type="subcellular location">
    <subcellularLocation>
        <location>Cell membrane</location>
        <topology>Multi-pass membrane protein</topology>
    </subcellularLocation>
</comment>
<comment type="PTM">
    <text evidence="2">N-glycosylated on at least seven Asn residues by identical hexasaccharide units composed of Man, GlcNAc, Glc and 6-deoxy-6-sulfoglucose residues in the molar ration of 2:2:1:1.</text>
</comment>
<comment type="PTM">
    <text evidence="2">O-glycosylated on probably as many as 35 positions by single Man residues.</text>
</comment>
<comment type="mass spectrometry">
    <text>Glycosylated.</text>
</comment>
<dbReference type="EMBL" id="Y10108">
    <property type="protein sequence ID" value="CAA71195.1"/>
    <property type="molecule type" value="Genomic_DNA"/>
</dbReference>
<dbReference type="EMBL" id="CP000077">
    <property type="protein sequence ID" value="AAY81164.1"/>
    <property type="molecule type" value="Genomic_DNA"/>
</dbReference>
<dbReference type="RefSeq" id="WP_011278666.1">
    <property type="nucleotide sequence ID" value="NC_007181.1"/>
</dbReference>
<dbReference type="STRING" id="330779.Saci_1858"/>
<dbReference type="GlyConnect" id="119">
    <property type="glycosylation" value="1 N-Linked glycan"/>
</dbReference>
<dbReference type="GlyCosmos" id="O54088">
    <property type="glycosylation" value="16 sites, 1 glycan"/>
</dbReference>
<dbReference type="iPTMnet" id="O54088"/>
<dbReference type="GeneID" id="14550050"/>
<dbReference type="GeneID" id="78442198"/>
<dbReference type="KEGG" id="sai:Saci_1858"/>
<dbReference type="PATRIC" id="fig|330779.12.peg.1806"/>
<dbReference type="eggNOG" id="arCOG06015">
    <property type="taxonomic scope" value="Archaea"/>
</dbReference>
<dbReference type="HOGENOM" id="CLU_575729_0_0_2"/>
<dbReference type="Proteomes" id="UP000001018">
    <property type="component" value="Chromosome"/>
</dbReference>
<dbReference type="GO" id="GO:0005886">
    <property type="term" value="C:plasma membrane"/>
    <property type="evidence" value="ECO:0007669"/>
    <property type="project" value="UniProtKB-SubCell"/>
</dbReference>
<dbReference type="GO" id="GO:0020037">
    <property type="term" value="F:heme binding"/>
    <property type="evidence" value="ECO:0007669"/>
    <property type="project" value="InterPro"/>
</dbReference>
<dbReference type="GO" id="GO:0046872">
    <property type="term" value="F:metal ion binding"/>
    <property type="evidence" value="ECO:0007669"/>
    <property type="project" value="UniProtKB-KW"/>
</dbReference>
<dbReference type="GO" id="GO:0022900">
    <property type="term" value="P:electron transport chain"/>
    <property type="evidence" value="ECO:0007669"/>
    <property type="project" value="InterPro"/>
</dbReference>
<dbReference type="CDD" id="cd09624">
    <property type="entry name" value="DOMON_b558_566"/>
    <property type="match status" value="1"/>
</dbReference>
<dbReference type="Gene3D" id="2.60.40.1190">
    <property type="match status" value="1"/>
</dbReference>
<dbReference type="InterPro" id="IPR019020">
    <property type="entry name" value="Cyt-c552/DMSO_Rdtase_haem-bd"/>
</dbReference>
<dbReference type="InterPro" id="IPR017572">
    <property type="entry name" value="Cyt_b558/566_suA"/>
</dbReference>
<dbReference type="NCBIfam" id="TIGR03154">
    <property type="entry name" value="sulfolob_CbsA"/>
    <property type="match status" value="1"/>
</dbReference>
<dbReference type="Pfam" id="PF09459">
    <property type="entry name" value="EB_dh"/>
    <property type="match status" value="1"/>
</dbReference>
<dbReference type="SMART" id="SM00887">
    <property type="entry name" value="EB_dh"/>
    <property type="match status" value="1"/>
</dbReference>
<keyword id="KW-1003">Cell membrane</keyword>
<keyword id="KW-0903">Direct protein sequencing</keyword>
<keyword id="KW-0249">Electron transport</keyword>
<keyword id="KW-0325">Glycoprotein</keyword>
<keyword id="KW-0349">Heme</keyword>
<keyword id="KW-0408">Iron</keyword>
<keyword id="KW-0472">Membrane</keyword>
<keyword id="KW-0479">Metal-binding</keyword>
<keyword id="KW-1185">Reference proteome</keyword>
<keyword id="KW-0812">Transmembrane</keyword>
<keyword id="KW-1133">Transmembrane helix</keyword>
<keyword id="KW-0813">Transport</keyword>
<feature type="chain" id="PRO_0000089383" description="Cytochrome b558/566 subunit A">
    <location>
        <begin position="1"/>
        <end position="462"/>
    </location>
</feature>
<feature type="topological domain" description="Cytoplasmic" evidence="1">
    <location>
        <begin position="1"/>
        <end position="8"/>
    </location>
</feature>
<feature type="transmembrane region" description="Helical; Name=1" evidence="1">
    <location>
        <begin position="9"/>
        <end position="26"/>
    </location>
</feature>
<feature type="topological domain" description="Extracellular" evidence="1">
    <location>
        <begin position="27"/>
        <end position="431"/>
    </location>
</feature>
<feature type="transmembrane region" description="Helical; Name=2" evidence="1">
    <location>
        <begin position="432"/>
        <end position="456"/>
    </location>
</feature>
<feature type="topological domain" description="Cytoplasmic" evidence="1">
    <location>
        <begin position="457"/>
        <end position="462"/>
    </location>
</feature>
<feature type="glycosylation site" description="N-linked (GlcNAc...) asparagine" evidence="1">
    <location>
        <position position="28"/>
    </location>
</feature>
<feature type="glycosylation site" description="N-linked (GlcNAc...) asparagine" evidence="1">
    <location>
        <position position="65"/>
    </location>
</feature>
<feature type="glycosylation site" description="N-linked (GlcNAc...) asparagine" evidence="1">
    <location>
        <position position="91"/>
    </location>
</feature>
<feature type="glycosylation site" description="N-linked (GlcNAc...) asparagine" evidence="1">
    <location>
        <position position="121"/>
    </location>
</feature>
<feature type="glycosylation site" description="N-linked (GlcNAc...) asparagine" evidence="2">
    <location>
        <position position="144"/>
    </location>
</feature>
<feature type="glycosylation site" description="N-linked (GlcNAc...) asparagine" evidence="2">
    <location>
        <position position="164"/>
    </location>
</feature>
<feature type="glycosylation site" description="N-linked (GlcNAc...) asparagine" evidence="1">
    <location>
        <position position="174"/>
    </location>
</feature>
<feature type="glycosylation site" description="N-linked (GlcNAc...) asparagine" evidence="1">
    <location>
        <position position="183"/>
    </location>
</feature>
<feature type="glycosylation site" description="N-linked (GlcNAc...) asparagine" evidence="1">
    <location>
        <position position="211"/>
    </location>
</feature>
<feature type="glycosylation site" description="N-linked (GlcNAc...) asparagine" evidence="1">
    <location>
        <position position="278"/>
    </location>
</feature>
<feature type="glycosylation site" description="N-linked (GlcNAc...) asparagine" evidence="1">
    <location>
        <position position="279"/>
    </location>
</feature>
<feature type="glycosylation site" description="N-linked (GlcNAc...) asparagine" evidence="1">
    <location>
        <position position="293"/>
    </location>
</feature>
<feature type="glycosylation site" description="N-linked (GlcNAc...) asparagine" evidence="1">
    <location>
        <position position="316"/>
    </location>
</feature>
<feature type="glycosylation site" description="N-linked (GlcNAc...) asparagine" evidence="1">
    <location>
        <position position="339"/>
    </location>
</feature>
<feature type="glycosylation site" description="N-linked (GlcNAc...) asparagine" evidence="1">
    <location>
        <position position="353"/>
    </location>
</feature>
<feature type="glycosylation site" description="N-linked (GlcNAc...) asparagine" evidence="1">
    <location>
        <position position="376"/>
    </location>
</feature>
<evidence type="ECO:0000255" key="1"/>
<evidence type="ECO:0000269" key="2">
    <source>
    </source>
</evidence>
<evidence type="ECO:0000269" key="3">
    <source>
    </source>
</evidence>
<name>CBSA_SULAC</name>
<reference key="1">
    <citation type="journal article" date="1998" name="J. Biol. Chem.">
        <title>Cytochrome b558/566 from the archaeon Sulfolobus acidocaldarius. A novel highly glycosylated, membrane-bound b-type hemoprotein.</title>
        <authorList>
            <person name="Hettmann T."/>
            <person name="Schmidt C.L."/>
            <person name="Anemueller S."/>
            <person name="Zaehringer U."/>
            <person name="Moll H."/>
            <person name="Petersen A."/>
            <person name="Schaefer G."/>
        </authorList>
    </citation>
    <scope>NUCLEOTIDE SEQUENCE [GENOMIC DNA]</scope>
    <scope>PARTIAL PROTEIN SEQUENCE</scope>
    <scope>MASS SPECTROMETRY</scope>
    <source>
        <strain>ATCC 33909 / DSM 639 / JCM 8929 / NBRC 15157 / NCIMB 11770</strain>
    </source>
</reference>
<reference key="2">
    <citation type="journal article" date="2005" name="J. Bacteriol.">
        <title>The genome of Sulfolobus acidocaldarius, a model organism of the Crenarchaeota.</title>
        <authorList>
            <person name="Chen L."/>
            <person name="Bruegger K."/>
            <person name="Skovgaard M."/>
            <person name="Redder P."/>
            <person name="She Q."/>
            <person name="Torarinsson E."/>
            <person name="Greve B."/>
            <person name="Awayez M."/>
            <person name="Zibat A."/>
            <person name="Klenk H.-P."/>
            <person name="Garrett R.A."/>
        </authorList>
    </citation>
    <scope>NUCLEOTIDE SEQUENCE [LARGE SCALE GENOMIC DNA]</scope>
    <source>
        <strain>ATCC 33909 / DSM 639 / JCM 8929 / NBRC 15157 / NCIMB 11770</strain>
    </source>
</reference>
<reference key="3">
    <citation type="journal article" date="2000" name="Eur. J. Biochem.">
        <title>Cytochrome b558/566 from the archaeon Sulfolobus acidocaldarius has a unique Asn-linked highly branched hexasaccharide chain containing 6-sulfoquinovose.</title>
        <authorList>
            <person name="Zaehringer U."/>
            <person name="Moll H."/>
            <person name="Hettmann T."/>
            <person name="Knirel Y.A."/>
            <person name="Schaefer G."/>
        </authorList>
    </citation>
    <scope>GLYCOSYLATION AT ASN-144 AND ASN-164</scope>
    <scope>STRUCTURE OF CARBOHYDRATE</scope>
    <source>
        <strain>ATCC 33909 / DSM 639 / JCM 8929 / NBRC 15157 / NCIMB 11770</strain>
    </source>
</reference>
<gene>
    <name type="primary">cbsA</name>
    <name type="ordered locus">Saci_1858</name>
</gene>
<accession>O54088</accession>
<accession>Q4J7R7</accession>
<sequence>MSLKIKSKITIGVLLIIFLLSIIFTLENVSLAQTSPQISVYKVVGSADLSNPGSAGYWSQIPWTNISLTANIPMAPTSGLTHYLLVKAAWNGSWIFILEEWQAPEPAFNAWSTAVAGIYPNASGPGLFRMIELTPGTTYSLERNYTNYVSIINGKEETGRIVFNYSGITLPAPNNTEITVMSNGTILLWHSPRPVEDLLYNDGMFYGYYVNSTWYYPDRAAIMWYLGSGVPTKDDMNIGGKYPGQQFDGITFKDAGGSLAQSGGSANIWMWVSGATWNNSTYDPAFKSNIWQNESLTGLSYVDSGNHGFAVPLYTNNTNMYEVDTAGIWYTPVASEGLNGSLFFIWTGAKYENGSWVVEFARPLSVPLDYQPFMPNITVGKTYYVAFAVWQGRLGETLFDKSITSSFLSLELVTTPPTSTTTSTSPVTTISSAIPPVTLYVTIIGVVVALVALVILYVVFRR</sequence>